<comment type="function">
    <text evidence="1">Catalyzes the condensation of formaldehyde and glutathione to S-hydroxymethylglutathione.</text>
</comment>
<comment type="catalytic activity">
    <reaction evidence="1">
        <text>S-(hydroxymethyl)glutathione = glutathione + formaldehyde</text>
        <dbReference type="Rhea" id="RHEA:22488"/>
        <dbReference type="ChEBI" id="CHEBI:16842"/>
        <dbReference type="ChEBI" id="CHEBI:57925"/>
        <dbReference type="ChEBI" id="CHEBI:58758"/>
        <dbReference type="EC" id="4.4.1.22"/>
    </reaction>
</comment>
<comment type="cofactor">
    <cofactor evidence="1 2">
        <name>Zn(2+)</name>
        <dbReference type="ChEBI" id="CHEBI:29105"/>
    </cofactor>
    <text evidence="1 2">Binds 2 Zn(2+) ions per subunit.</text>
</comment>
<comment type="pathway">
    <text evidence="1">One-carbon metabolism; formaldehyde degradation; formate from formaldehyde (glutathione route): step 1/3.</text>
</comment>
<comment type="similarity">
    <text evidence="3">Belongs to the Gfa family.</text>
</comment>
<accession>A2QBH6</accession>
<evidence type="ECO:0000255" key="1">
    <source>
        <dbReference type="HAMAP-Rule" id="MF_03142"/>
    </source>
</evidence>
<evidence type="ECO:0000255" key="2">
    <source>
        <dbReference type="PROSITE-ProRule" id="PRU01239"/>
    </source>
</evidence>
<evidence type="ECO:0000305" key="3"/>
<protein>
    <recommendedName>
        <fullName evidence="1">Putative glutathione-dependent formaldehyde-activating enzyme</fullName>
        <ecNumber evidence="1">4.4.1.22</ecNumber>
    </recommendedName>
    <alternativeName>
        <fullName evidence="1">S-(hydroxymethyl)glutathione synthase</fullName>
    </alternativeName>
</protein>
<keyword id="KW-0456">Lyase</keyword>
<keyword id="KW-0479">Metal-binding</keyword>
<keyword id="KW-1185">Reference proteome</keyword>
<keyword id="KW-0862">Zinc</keyword>
<sequence>MSPSLHPLLDNGITKGDPNFPGGNLYCKCSSDKVVVKLASNVAHNHACGCSKCWKPAGSLFSIVGVVPRDAVSVTEHAEKLSIVDASAAIQRYACKGCGVHMFGRIEKDHPFKGLDFVHAELSDQKGWQEPQFAGFVSSIIEQGFHPKGMEEVRSKFHSLGLETYDALSPALMDLIATFTAQRAGVLSANL</sequence>
<feature type="chain" id="PRO_0000406154" description="Putative glutathione-dependent formaldehyde-activating enzyme">
    <location>
        <begin position="1"/>
        <end position="191"/>
    </location>
</feature>
<feature type="domain" description="CENP-V/GFA" evidence="2">
    <location>
        <begin position="20"/>
        <end position="166"/>
    </location>
</feature>
<feature type="binding site" evidence="1 2">
    <location>
        <position position="27"/>
    </location>
    <ligand>
        <name>Zn(2+)</name>
        <dbReference type="ChEBI" id="CHEBI:29105"/>
        <label>1</label>
        <note>structural</note>
    </ligand>
</feature>
<feature type="binding site" evidence="1 2">
    <location>
        <position position="29"/>
    </location>
    <ligand>
        <name>Zn(2+)</name>
        <dbReference type="ChEBI" id="CHEBI:29105"/>
        <label>1</label>
        <note>structural</note>
    </ligand>
</feature>
<feature type="binding site" evidence="1 2">
    <location>
        <position position="48"/>
    </location>
    <ligand>
        <name>Zn(2+)</name>
        <dbReference type="ChEBI" id="CHEBI:29105"/>
        <label>2</label>
        <note>catalytic</note>
    </ligand>
</feature>
<feature type="binding site" evidence="1 2">
    <location>
        <position position="50"/>
    </location>
    <ligand>
        <name>Zn(2+)</name>
        <dbReference type="ChEBI" id="CHEBI:29105"/>
        <label>2</label>
        <note>catalytic</note>
    </ligand>
</feature>
<feature type="binding site" evidence="1 2">
    <location>
        <position position="53"/>
    </location>
    <ligand>
        <name>Zn(2+)</name>
        <dbReference type="ChEBI" id="CHEBI:29105"/>
        <label>2</label>
        <note>catalytic</note>
    </ligand>
</feature>
<feature type="binding site" evidence="1 2">
    <location>
        <position position="95"/>
    </location>
    <ligand>
        <name>Zn(2+)</name>
        <dbReference type="ChEBI" id="CHEBI:29105"/>
        <label>1</label>
        <note>structural</note>
    </ligand>
</feature>
<feature type="binding site" evidence="1 2">
    <location>
        <position position="98"/>
    </location>
    <ligand>
        <name>Zn(2+)</name>
        <dbReference type="ChEBI" id="CHEBI:29105"/>
        <label>1</label>
        <note>structural</note>
    </ligand>
</feature>
<name>GFA_ASPNC</name>
<gene>
    <name type="ORF">An02g00080</name>
</gene>
<proteinExistence type="inferred from homology"/>
<organism>
    <name type="scientific">Aspergillus niger (strain ATCC MYA-4892 / CBS 513.88 / FGSC A1513)</name>
    <dbReference type="NCBI Taxonomy" id="425011"/>
    <lineage>
        <taxon>Eukaryota</taxon>
        <taxon>Fungi</taxon>
        <taxon>Dikarya</taxon>
        <taxon>Ascomycota</taxon>
        <taxon>Pezizomycotina</taxon>
        <taxon>Eurotiomycetes</taxon>
        <taxon>Eurotiomycetidae</taxon>
        <taxon>Eurotiales</taxon>
        <taxon>Aspergillaceae</taxon>
        <taxon>Aspergillus</taxon>
        <taxon>Aspergillus subgen. Circumdati</taxon>
    </lineage>
</organism>
<dbReference type="EC" id="4.4.1.22" evidence="1"/>
<dbReference type="EMBL" id="AM269996">
    <property type="protein sequence ID" value="CAK96223.1"/>
    <property type="molecule type" value="Genomic_DNA"/>
</dbReference>
<dbReference type="RefSeq" id="XP_001399146.1">
    <property type="nucleotide sequence ID" value="XM_001399109.1"/>
</dbReference>
<dbReference type="SMR" id="A2QBH6"/>
<dbReference type="EnsemblFungi" id="CAK96223">
    <property type="protein sequence ID" value="CAK96223"/>
    <property type="gene ID" value="An02g00080"/>
</dbReference>
<dbReference type="GeneID" id="4979627"/>
<dbReference type="KEGG" id="ang:An02g00080"/>
<dbReference type="VEuPathDB" id="FungiDB:An02g00080"/>
<dbReference type="HOGENOM" id="CLU_090716_0_0_1"/>
<dbReference type="UniPathway" id="UPA00562">
    <property type="reaction ID" value="UER00621"/>
</dbReference>
<dbReference type="Proteomes" id="UP000006706">
    <property type="component" value="Chromosome 4R"/>
</dbReference>
<dbReference type="GO" id="GO:0051907">
    <property type="term" value="F:S-(hydroxymethyl)glutathione synthase activity"/>
    <property type="evidence" value="ECO:0007669"/>
    <property type="project" value="UniProtKB-UniRule"/>
</dbReference>
<dbReference type="GO" id="GO:0008270">
    <property type="term" value="F:zinc ion binding"/>
    <property type="evidence" value="ECO:0007669"/>
    <property type="project" value="UniProtKB-UniRule"/>
</dbReference>
<dbReference type="GO" id="GO:0046294">
    <property type="term" value="P:formaldehyde catabolic process"/>
    <property type="evidence" value="ECO:0007669"/>
    <property type="project" value="UniProtKB-UniRule"/>
</dbReference>
<dbReference type="Gene3D" id="3.90.1590.10">
    <property type="entry name" value="glutathione-dependent formaldehyde- activating enzyme (gfa)"/>
    <property type="match status" value="1"/>
</dbReference>
<dbReference type="HAMAP" id="MF_00723">
    <property type="entry name" value="Formald_GSH"/>
    <property type="match status" value="1"/>
</dbReference>
<dbReference type="InterPro" id="IPR006913">
    <property type="entry name" value="CENP-V/GFA"/>
</dbReference>
<dbReference type="InterPro" id="IPR014185">
    <property type="entry name" value="Formald_GSH"/>
</dbReference>
<dbReference type="InterPro" id="IPR011057">
    <property type="entry name" value="Mss4-like_sf"/>
</dbReference>
<dbReference type="NCBIfam" id="TIGR02820">
    <property type="entry name" value="formald_GSH"/>
    <property type="match status" value="1"/>
</dbReference>
<dbReference type="NCBIfam" id="NF003829">
    <property type="entry name" value="PRK05417.1"/>
    <property type="match status" value="1"/>
</dbReference>
<dbReference type="PANTHER" id="PTHR33337:SF40">
    <property type="entry name" value="CENP-V_GFA DOMAIN-CONTAINING PROTEIN-RELATED"/>
    <property type="match status" value="1"/>
</dbReference>
<dbReference type="PANTHER" id="PTHR33337">
    <property type="entry name" value="GFA DOMAIN-CONTAINING PROTEIN"/>
    <property type="match status" value="1"/>
</dbReference>
<dbReference type="Pfam" id="PF04828">
    <property type="entry name" value="GFA"/>
    <property type="match status" value="1"/>
</dbReference>
<dbReference type="PIRSF" id="PIRSF033318">
    <property type="entry name" value="Formald_GSH"/>
    <property type="match status" value="1"/>
</dbReference>
<dbReference type="SUPFAM" id="SSF51316">
    <property type="entry name" value="Mss4-like"/>
    <property type="match status" value="1"/>
</dbReference>
<dbReference type="PROSITE" id="PS51891">
    <property type="entry name" value="CENP_V_GFA"/>
    <property type="match status" value="1"/>
</dbReference>
<reference key="1">
    <citation type="journal article" date="2007" name="Nat. Biotechnol.">
        <title>Genome sequencing and analysis of the versatile cell factory Aspergillus niger CBS 513.88.</title>
        <authorList>
            <person name="Pel H.J."/>
            <person name="de Winde J.H."/>
            <person name="Archer D.B."/>
            <person name="Dyer P.S."/>
            <person name="Hofmann G."/>
            <person name="Schaap P.J."/>
            <person name="Turner G."/>
            <person name="de Vries R.P."/>
            <person name="Albang R."/>
            <person name="Albermann K."/>
            <person name="Andersen M.R."/>
            <person name="Bendtsen J.D."/>
            <person name="Benen J.A.E."/>
            <person name="van den Berg M."/>
            <person name="Breestraat S."/>
            <person name="Caddick M.X."/>
            <person name="Contreras R."/>
            <person name="Cornell M."/>
            <person name="Coutinho P.M."/>
            <person name="Danchin E.G.J."/>
            <person name="Debets A.J.M."/>
            <person name="Dekker P."/>
            <person name="van Dijck P.W.M."/>
            <person name="van Dijk A."/>
            <person name="Dijkhuizen L."/>
            <person name="Driessen A.J.M."/>
            <person name="d'Enfert C."/>
            <person name="Geysens S."/>
            <person name="Goosen C."/>
            <person name="Groot G.S.P."/>
            <person name="de Groot P.W.J."/>
            <person name="Guillemette T."/>
            <person name="Henrissat B."/>
            <person name="Herweijer M."/>
            <person name="van den Hombergh J.P.T.W."/>
            <person name="van den Hondel C.A.M.J.J."/>
            <person name="van der Heijden R.T.J.M."/>
            <person name="van der Kaaij R.M."/>
            <person name="Klis F.M."/>
            <person name="Kools H.J."/>
            <person name="Kubicek C.P."/>
            <person name="van Kuyk P.A."/>
            <person name="Lauber J."/>
            <person name="Lu X."/>
            <person name="van der Maarel M.J.E.C."/>
            <person name="Meulenberg R."/>
            <person name="Menke H."/>
            <person name="Mortimer M.A."/>
            <person name="Nielsen J."/>
            <person name="Oliver S.G."/>
            <person name="Olsthoorn M."/>
            <person name="Pal K."/>
            <person name="van Peij N.N.M.E."/>
            <person name="Ram A.F.J."/>
            <person name="Rinas U."/>
            <person name="Roubos J.A."/>
            <person name="Sagt C.M.J."/>
            <person name="Schmoll M."/>
            <person name="Sun J."/>
            <person name="Ussery D."/>
            <person name="Varga J."/>
            <person name="Vervecken W."/>
            <person name="van de Vondervoort P.J.J."/>
            <person name="Wedler H."/>
            <person name="Woesten H.A.B."/>
            <person name="Zeng A.-P."/>
            <person name="van Ooyen A.J.J."/>
            <person name="Visser J."/>
            <person name="Stam H."/>
        </authorList>
    </citation>
    <scope>NUCLEOTIDE SEQUENCE [LARGE SCALE GENOMIC DNA]</scope>
    <source>
        <strain>ATCC MYA-4892 / CBS 513.88 / FGSC A1513</strain>
    </source>
</reference>